<organism>
    <name type="scientific">Escherichia fergusonii (strain ATCC 35469 / DSM 13698 / CCUG 18766 / IAM 14443 / JCM 21226 / LMG 7866 / NBRC 102419 / NCTC 12128 / CDC 0568-73)</name>
    <dbReference type="NCBI Taxonomy" id="585054"/>
    <lineage>
        <taxon>Bacteria</taxon>
        <taxon>Pseudomonadati</taxon>
        <taxon>Pseudomonadota</taxon>
        <taxon>Gammaproteobacteria</taxon>
        <taxon>Enterobacterales</taxon>
        <taxon>Enterobacteriaceae</taxon>
        <taxon>Escherichia</taxon>
    </lineage>
</organism>
<dbReference type="EC" id="6.1.1.19" evidence="1"/>
<dbReference type="EMBL" id="CU928158">
    <property type="protein sequence ID" value="CAQ88723.1"/>
    <property type="molecule type" value="Genomic_DNA"/>
</dbReference>
<dbReference type="RefSeq" id="WP_001025345.1">
    <property type="nucleotide sequence ID" value="NC_011740.1"/>
</dbReference>
<dbReference type="SMR" id="B7LPH0"/>
<dbReference type="GeneID" id="75057754"/>
<dbReference type="KEGG" id="efe:EFER_1197"/>
<dbReference type="HOGENOM" id="CLU_006406_5_1_6"/>
<dbReference type="OrthoDB" id="9803211at2"/>
<dbReference type="Proteomes" id="UP000000745">
    <property type="component" value="Chromosome"/>
</dbReference>
<dbReference type="GO" id="GO:0005737">
    <property type="term" value="C:cytoplasm"/>
    <property type="evidence" value="ECO:0007669"/>
    <property type="project" value="UniProtKB-SubCell"/>
</dbReference>
<dbReference type="GO" id="GO:0004814">
    <property type="term" value="F:arginine-tRNA ligase activity"/>
    <property type="evidence" value="ECO:0007669"/>
    <property type="project" value="UniProtKB-UniRule"/>
</dbReference>
<dbReference type="GO" id="GO:0005524">
    <property type="term" value="F:ATP binding"/>
    <property type="evidence" value="ECO:0007669"/>
    <property type="project" value="UniProtKB-UniRule"/>
</dbReference>
<dbReference type="GO" id="GO:0006420">
    <property type="term" value="P:arginyl-tRNA aminoacylation"/>
    <property type="evidence" value="ECO:0007669"/>
    <property type="project" value="UniProtKB-UniRule"/>
</dbReference>
<dbReference type="CDD" id="cd07956">
    <property type="entry name" value="Anticodon_Ia_Arg"/>
    <property type="match status" value="1"/>
</dbReference>
<dbReference type="CDD" id="cd00671">
    <property type="entry name" value="ArgRS_core"/>
    <property type="match status" value="1"/>
</dbReference>
<dbReference type="FunFam" id="1.10.730.10:FF:000001">
    <property type="entry name" value="Arginine--tRNA ligase"/>
    <property type="match status" value="1"/>
</dbReference>
<dbReference type="FunFam" id="3.30.1360.70:FF:000001">
    <property type="entry name" value="Arginine--tRNA ligase"/>
    <property type="match status" value="1"/>
</dbReference>
<dbReference type="FunFam" id="3.40.50.620:FF:000030">
    <property type="entry name" value="Arginine--tRNA ligase"/>
    <property type="match status" value="1"/>
</dbReference>
<dbReference type="Gene3D" id="3.30.1360.70">
    <property type="entry name" value="Arginyl tRNA synthetase N-terminal domain"/>
    <property type="match status" value="1"/>
</dbReference>
<dbReference type="Gene3D" id="3.40.50.620">
    <property type="entry name" value="HUPs"/>
    <property type="match status" value="1"/>
</dbReference>
<dbReference type="Gene3D" id="1.10.730.10">
    <property type="entry name" value="Isoleucyl-tRNA Synthetase, Domain 1"/>
    <property type="match status" value="1"/>
</dbReference>
<dbReference type="HAMAP" id="MF_00123">
    <property type="entry name" value="Arg_tRNA_synth"/>
    <property type="match status" value="1"/>
</dbReference>
<dbReference type="InterPro" id="IPR001412">
    <property type="entry name" value="aa-tRNA-synth_I_CS"/>
</dbReference>
<dbReference type="InterPro" id="IPR001278">
    <property type="entry name" value="Arg-tRNA-ligase"/>
</dbReference>
<dbReference type="InterPro" id="IPR005148">
    <property type="entry name" value="Arg-tRNA-synth_N"/>
</dbReference>
<dbReference type="InterPro" id="IPR036695">
    <property type="entry name" value="Arg-tRNA-synth_N_sf"/>
</dbReference>
<dbReference type="InterPro" id="IPR035684">
    <property type="entry name" value="ArgRS_core"/>
</dbReference>
<dbReference type="InterPro" id="IPR008909">
    <property type="entry name" value="DALR_anticod-bd"/>
</dbReference>
<dbReference type="InterPro" id="IPR014729">
    <property type="entry name" value="Rossmann-like_a/b/a_fold"/>
</dbReference>
<dbReference type="InterPro" id="IPR009080">
    <property type="entry name" value="tRNAsynth_Ia_anticodon-bd"/>
</dbReference>
<dbReference type="NCBIfam" id="TIGR00456">
    <property type="entry name" value="argS"/>
    <property type="match status" value="1"/>
</dbReference>
<dbReference type="PANTHER" id="PTHR11956:SF5">
    <property type="entry name" value="ARGININE--TRNA LIGASE, CYTOPLASMIC"/>
    <property type="match status" value="1"/>
</dbReference>
<dbReference type="PANTHER" id="PTHR11956">
    <property type="entry name" value="ARGINYL-TRNA SYNTHETASE"/>
    <property type="match status" value="1"/>
</dbReference>
<dbReference type="Pfam" id="PF03485">
    <property type="entry name" value="Arg_tRNA_synt_N"/>
    <property type="match status" value="1"/>
</dbReference>
<dbReference type="Pfam" id="PF05746">
    <property type="entry name" value="DALR_1"/>
    <property type="match status" value="1"/>
</dbReference>
<dbReference type="Pfam" id="PF00750">
    <property type="entry name" value="tRNA-synt_1d"/>
    <property type="match status" value="1"/>
</dbReference>
<dbReference type="PRINTS" id="PR01038">
    <property type="entry name" value="TRNASYNTHARG"/>
</dbReference>
<dbReference type="SMART" id="SM01016">
    <property type="entry name" value="Arg_tRNA_synt_N"/>
    <property type="match status" value="1"/>
</dbReference>
<dbReference type="SMART" id="SM00836">
    <property type="entry name" value="DALR_1"/>
    <property type="match status" value="1"/>
</dbReference>
<dbReference type="SUPFAM" id="SSF47323">
    <property type="entry name" value="Anticodon-binding domain of a subclass of class I aminoacyl-tRNA synthetases"/>
    <property type="match status" value="1"/>
</dbReference>
<dbReference type="SUPFAM" id="SSF55190">
    <property type="entry name" value="Arginyl-tRNA synthetase (ArgRS), N-terminal 'additional' domain"/>
    <property type="match status" value="1"/>
</dbReference>
<dbReference type="SUPFAM" id="SSF52374">
    <property type="entry name" value="Nucleotidylyl transferase"/>
    <property type="match status" value="1"/>
</dbReference>
<dbReference type="PROSITE" id="PS00178">
    <property type="entry name" value="AA_TRNA_LIGASE_I"/>
    <property type="match status" value="1"/>
</dbReference>
<evidence type="ECO:0000255" key="1">
    <source>
        <dbReference type="HAMAP-Rule" id="MF_00123"/>
    </source>
</evidence>
<keyword id="KW-0030">Aminoacyl-tRNA synthetase</keyword>
<keyword id="KW-0067">ATP-binding</keyword>
<keyword id="KW-0963">Cytoplasm</keyword>
<keyword id="KW-0436">Ligase</keyword>
<keyword id="KW-0547">Nucleotide-binding</keyword>
<keyword id="KW-0648">Protein biosynthesis</keyword>
<proteinExistence type="inferred from homology"/>
<gene>
    <name evidence="1" type="primary">argS</name>
    <name type="ordered locus">EFER_1197</name>
</gene>
<sequence length="577" mass="64633">MNIQALLSEKVRQAMIAAGAPADCEPQVRQSAKVQFGDYQANGMMAVAKKLGMAPRQLAEQVLTHLDLNGIASKVEIAGPGFINIFLDPTFLAENVQQALKSDRLGVATPEKQTIVVDYSAPNVAKEMHVGHLRSTIIGDAAVRTLEFLGHKVIRANHVGDWGTQFGMLIAWLEKQQQENAGEMALADLEGFYRDAKKHYDEDEEFAERARNYVVKLQSGDEYFREMWRKLVDITMTQNQITYDRLNVTLTRDDVMGESLYNPMLPGIVADLKAKGLAVESEGATVVFLDEFKNKEGDPMGVIIQKKDGGYLYTTTDIACAKYRYETLHADRVLYYIDSRQHQHLMQAWAIVRKAGYVPESVPLEHHMFGMMLGKDGKPFKTRAGGTVKLADLLDEALERARRLVAEKNPDMPADELEKLANAVGIGAVKYADLSKNRTTDYVFDWDNMLAFEGNTAPYMQYAYTRVLSVFRKAEIAEEELAAAPVIIREDREAQLAARLLQFEETLTVVAREGTPHVMCAYLYDLAGLFSSFYEHCPILSAENEEVRNSRLKLALLTAKTLKLGLDTLGIETVERM</sequence>
<name>SYR_ESCF3</name>
<protein>
    <recommendedName>
        <fullName evidence="1">Arginine--tRNA ligase</fullName>
        <ecNumber evidence="1">6.1.1.19</ecNumber>
    </recommendedName>
    <alternativeName>
        <fullName evidence="1">Arginyl-tRNA synthetase</fullName>
        <shortName evidence="1">ArgRS</shortName>
    </alternativeName>
</protein>
<feature type="chain" id="PRO_1000198909" description="Arginine--tRNA ligase">
    <location>
        <begin position="1"/>
        <end position="577"/>
    </location>
</feature>
<feature type="short sequence motif" description="'HIGH' region">
    <location>
        <begin position="122"/>
        <end position="132"/>
    </location>
</feature>
<comment type="catalytic activity">
    <reaction evidence="1">
        <text>tRNA(Arg) + L-arginine + ATP = L-arginyl-tRNA(Arg) + AMP + diphosphate</text>
        <dbReference type="Rhea" id="RHEA:20301"/>
        <dbReference type="Rhea" id="RHEA-COMP:9658"/>
        <dbReference type="Rhea" id="RHEA-COMP:9673"/>
        <dbReference type="ChEBI" id="CHEBI:30616"/>
        <dbReference type="ChEBI" id="CHEBI:32682"/>
        <dbReference type="ChEBI" id="CHEBI:33019"/>
        <dbReference type="ChEBI" id="CHEBI:78442"/>
        <dbReference type="ChEBI" id="CHEBI:78513"/>
        <dbReference type="ChEBI" id="CHEBI:456215"/>
        <dbReference type="EC" id="6.1.1.19"/>
    </reaction>
</comment>
<comment type="subunit">
    <text evidence="1">Monomer.</text>
</comment>
<comment type="subcellular location">
    <subcellularLocation>
        <location evidence="1">Cytoplasm</location>
    </subcellularLocation>
</comment>
<comment type="similarity">
    <text evidence="1">Belongs to the class-I aminoacyl-tRNA synthetase family.</text>
</comment>
<reference key="1">
    <citation type="journal article" date="2009" name="PLoS Genet.">
        <title>Organised genome dynamics in the Escherichia coli species results in highly diverse adaptive paths.</title>
        <authorList>
            <person name="Touchon M."/>
            <person name="Hoede C."/>
            <person name="Tenaillon O."/>
            <person name="Barbe V."/>
            <person name="Baeriswyl S."/>
            <person name="Bidet P."/>
            <person name="Bingen E."/>
            <person name="Bonacorsi S."/>
            <person name="Bouchier C."/>
            <person name="Bouvet O."/>
            <person name="Calteau A."/>
            <person name="Chiapello H."/>
            <person name="Clermont O."/>
            <person name="Cruveiller S."/>
            <person name="Danchin A."/>
            <person name="Diard M."/>
            <person name="Dossat C."/>
            <person name="Karoui M.E."/>
            <person name="Frapy E."/>
            <person name="Garry L."/>
            <person name="Ghigo J.M."/>
            <person name="Gilles A.M."/>
            <person name="Johnson J."/>
            <person name="Le Bouguenec C."/>
            <person name="Lescat M."/>
            <person name="Mangenot S."/>
            <person name="Martinez-Jehanne V."/>
            <person name="Matic I."/>
            <person name="Nassif X."/>
            <person name="Oztas S."/>
            <person name="Petit M.A."/>
            <person name="Pichon C."/>
            <person name="Rouy Z."/>
            <person name="Ruf C.S."/>
            <person name="Schneider D."/>
            <person name="Tourret J."/>
            <person name="Vacherie B."/>
            <person name="Vallenet D."/>
            <person name="Medigue C."/>
            <person name="Rocha E.P.C."/>
            <person name="Denamur E."/>
        </authorList>
    </citation>
    <scope>NUCLEOTIDE SEQUENCE [LARGE SCALE GENOMIC DNA]</scope>
    <source>
        <strain>ATCC 35469 / DSM 13698 / BCRC 15582 / CCUG 18766 / IAM 14443 / JCM 21226 / LMG 7866 / NBRC 102419 / NCTC 12128 / CDC 0568-73</strain>
    </source>
</reference>
<accession>B7LPH0</accession>